<gene>
    <name evidence="1" type="primary">glk</name>
    <name type="ordered locus">YPA_2166</name>
</gene>
<accession>Q1C5Z1</accession>
<protein>
    <recommendedName>
        <fullName evidence="1">Glucokinase</fullName>
        <ecNumber evidence="1">2.7.1.2</ecNumber>
    </recommendedName>
    <alternativeName>
        <fullName evidence="1">Glucose kinase</fullName>
    </alternativeName>
</protein>
<feature type="chain" id="PRO_0000268794" description="Glucokinase">
    <location>
        <begin position="1"/>
        <end position="323"/>
    </location>
</feature>
<feature type="binding site" evidence="1">
    <location>
        <begin position="8"/>
        <end position="13"/>
    </location>
    <ligand>
        <name>ATP</name>
        <dbReference type="ChEBI" id="CHEBI:30616"/>
    </ligand>
</feature>
<organism>
    <name type="scientific">Yersinia pestis bv. Antiqua (strain Antiqua)</name>
    <dbReference type="NCBI Taxonomy" id="360102"/>
    <lineage>
        <taxon>Bacteria</taxon>
        <taxon>Pseudomonadati</taxon>
        <taxon>Pseudomonadota</taxon>
        <taxon>Gammaproteobacteria</taxon>
        <taxon>Enterobacterales</taxon>
        <taxon>Yersiniaceae</taxon>
        <taxon>Yersinia</taxon>
    </lineage>
</organism>
<reference key="1">
    <citation type="journal article" date="2006" name="J. Bacteriol.">
        <title>Complete genome sequence of Yersinia pestis strains Antiqua and Nepal516: evidence of gene reduction in an emerging pathogen.</title>
        <authorList>
            <person name="Chain P.S.G."/>
            <person name="Hu P."/>
            <person name="Malfatti S.A."/>
            <person name="Radnedge L."/>
            <person name="Larimer F."/>
            <person name="Vergez L.M."/>
            <person name="Worsham P."/>
            <person name="Chu M.C."/>
            <person name="Andersen G.L."/>
        </authorList>
    </citation>
    <scope>NUCLEOTIDE SEQUENCE [LARGE SCALE GENOMIC DNA]</scope>
    <source>
        <strain>Antiqua</strain>
    </source>
</reference>
<dbReference type="EC" id="2.7.1.2" evidence="1"/>
<dbReference type="EMBL" id="CP000308">
    <property type="protein sequence ID" value="ABG14131.1"/>
    <property type="molecule type" value="Genomic_DNA"/>
</dbReference>
<dbReference type="RefSeq" id="WP_002211615.1">
    <property type="nucleotide sequence ID" value="NZ_CP009906.1"/>
</dbReference>
<dbReference type="SMR" id="Q1C5Z1"/>
<dbReference type="GeneID" id="57975727"/>
<dbReference type="KEGG" id="ypa:YPA_2166"/>
<dbReference type="Proteomes" id="UP000001971">
    <property type="component" value="Chromosome"/>
</dbReference>
<dbReference type="GO" id="GO:0005829">
    <property type="term" value="C:cytosol"/>
    <property type="evidence" value="ECO:0007669"/>
    <property type="project" value="TreeGrafter"/>
</dbReference>
<dbReference type="GO" id="GO:0005524">
    <property type="term" value="F:ATP binding"/>
    <property type="evidence" value="ECO:0007669"/>
    <property type="project" value="UniProtKB-UniRule"/>
</dbReference>
<dbReference type="GO" id="GO:0005536">
    <property type="term" value="F:D-glucose binding"/>
    <property type="evidence" value="ECO:0007669"/>
    <property type="project" value="InterPro"/>
</dbReference>
<dbReference type="GO" id="GO:0004340">
    <property type="term" value="F:glucokinase activity"/>
    <property type="evidence" value="ECO:0007669"/>
    <property type="project" value="UniProtKB-UniRule"/>
</dbReference>
<dbReference type="GO" id="GO:0006096">
    <property type="term" value="P:glycolytic process"/>
    <property type="evidence" value="ECO:0007669"/>
    <property type="project" value="UniProtKB-UniRule"/>
</dbReference>
<dbReference type="CDD" id="cd24008">
    <property type="entry name" value="ASKHA_NBD_GLK"/>
    <property type="match status" value="1"/>
</dbReference>
<dbReference type="FunFam" id="3.30.420.40:FF:000045">
    <property type="entry name" value="Glucokinase"/>
    <property type="match status" value="1"/>
</dbReference>
<dbReference type="FunFam" id="3.40.367.20:FF:000002">
    <property type="entry name" value="Glucokinase"/>
    <property type="match status" value="1"/>
</dbReference>
<dbReference type="Gene3D" id="3.30.420.40">
    <property type="match status" value="1"/>
</dbReference>
<dbReference type="Gene3D" id="3.40.367.20">
    <property type="match status" value="1"/>
</dbReference>
<dbReference type="HAMAP" id="MF_00524">
    <property type="entry name" value="Glucokinase"/>
    <property type="match status" value="1"/>
</dbReference>
<dbReference type="InterPro" id="IPR043129">
    <property type="entry name" value="ATPase_NBD"/>
</dbReference>
<dbReference type="InterPro" id="IPR050201">
    <property type="entry name" value="Bacterial_glucokinase"/>
</dbReference>
<dbReference type="InterPro" id="IPR003836">
    <property type="entry name" value="Glucokinase"/>
</dbReference>
<dbReference type="NCBIfam" id="TIGR00749">
    <property type="entry name" value="glk"/>
    <property type="match status" value="1"/>
</dbReference>
<dbReference type="NCBIfam" id="NF001414">
    <property type="entry name" value="PRK00292.1-1"/>
    <property type="match status" value="1"/>
</dbReference>
<dbReference type="NCBIfam" id="NF001416">
    <property type="entry name" value="PRK00292.1-3"/>
    <property type="match status" value="1"/>
</dbReference>
<dbReference type="NCBIfam" id="NF009073">
    <property type="entry name" value="PRK12408.1"/>
    <property type="match status" value="1"/>
</dbReference>
<dbReference type="PANTHER" id="PTHR47690">
    <property type="entry name" value="GLUCOKINASE"/>
    <property type="match status" value="1"/>
</dbReference>
<dbReference type="PANTHER" id="PTHR47690:SF1">
    <property type="entry name" value="GLUCOKINASE"/>
    <property type="match status" value="1"/>
</dbReference>
<dbReference type="Pfam" id="PF02685">
    <property type="entry name" value="Glucokinase"/>
    <property type="match status" value="1"/>
</dbReference>
<dbReference type="SUPFAM" id="SSF53067">
    <property type="entry name" value="Actin-like ATPase domain"/>
    <property type="match status" value="1"/>
</dbReference>
<proteinExistence type="inferred from homology"/>
<comment type="catalytic activity">
    <reaction evidence="1">
        <text>D-glucose + ATP = D-glucose 6-phosphate + ADP + H(+)</text>
        <dbReference type="Rhea" id="RHEA:17825"/>
        <dbReference type="ChEBI" id="CHEBI:4167"/>
        <dbReference type="ChEBI" id="CHEBI:15378"/>
        <dbReference type="ChEBI" id="CHEBI:30616"/>
        <dbReference type="ChEBI" id="CHEBI:61548"/>
        <dbReference type="ChEBI" id="CHEBI:456216"/>
        <dbReference type="EC" id="2.7.1.2"/>
    </reaction>
</comment>
<comment type="subcellular location">
    <subcellularLocation>
        <location evidence="1">Cytoplasm</location>
    </subcellularLocation>
</comment>
<comment type="similarity">
    <text evidence="1">Belongs to the bacterial glucokinase family.</text>
</comment>
<name>GLK_YERPA</name>
<sequence length="323" mass="34664">MTTYALVGDVGGTNARLALCAVATGEILQAKTYSGLEYESLEDVIKQYLSEHQAKVTDACIAIACPITGDWVAMTNHTWAFSIAAMQQNLGLDHLEVINDFTAVSMAIPVLPAQDVLQFGGTQPQPGKPVAVYGAGTGLGVAHLVNVDRRWISLAGEGGHVDFAPNSEEEDQILAVLRQELGHVSAERVLSGPGLVNLYRAIVISDARLPEKLAPKDITARALADSCTDCRRALSLFCVIMGRFGGNLALNLSTFGGVYIAGGIVPRFMEFFKASGFRAAFEDKGRFKDFLQDIPVYMITHPQPGLLGAGAYLRQKLGYELSS</sequence>
<keyword id="KW-0067">ATP-binding</keyword>
<keyword id="KW-0963">Cytoplasm</keyword>
<keyword id="KW-0324">Glycolysis</keyword>
<keyword id="KW-0418">Kinase</keyword>
<keyword id="KW-0547">Nucleotide-binding</keyword>
<keyword id="KW-0808">Transferase</keyword>
<evidence type="ECO:0000255" key="1">
    <source>
        <dbReference type="HAMAP-Rule" id="MF_00524"/>
    </source>
</evidence>